<dbReference type="EMBL" id="AM295250">
    <property type="protein sequence ID" value="CAL27160.1"/>
    <property type="molecule type" value="Genomic_DNA"/>
</dbReference>
<dbReference type="RefSeq" id="WP_012664275.1">
    <property type="nucleotide sequence ID" value="NC_012121.1"/>
</dbReference>
<dbReference type="SMR" id="B9DKS1"/>
<dbReference type="KEGG" id="sca:SCA_0247"/>
<dbReference type="eggNOG" id="COG4844">
    <property type="taxonomic scope" value="Bacteria"/>
</dbReference>
<dbReference type="HOGENOM" id="CLU_2156795_0_0_9"/>
<dbReference type="OrthoDB" id="1645211at2"/>
<dbReference type="BioCyc" id="SCAR396513:SCA_RS01260-MONOMER"/>
<dbReference type="Proteomes" id="UP000000444">
    <property type="component" value="Chromosome"/>
</dbReference>
<dbReference type="HAMAP" id="MF_01863">
    <property type="entry name" value="UPF0741"/>
    <property type="match status" value="1"/>
</dbReference>
<dbReference type="InterPro" id="IPR009910">
    <property type="entry name" value="DUF1450"/>
</dbReference>
<dbReference type="InterPro" id="IPR020880">
    <property type="entry name" value="UPF0741"/>
</dbReference>
<dbReference type="Pfam" id="PF07293">
    <property type="entry name" value="DUF1450"/>
    <property type="match status" value="1"/>
</dbReference>
<accession>B9DKS1</accession>
<name>Y247_STACT</name>
<comment type="similarity">
    <text evidence="1">Belongs to the UPF0741 family.</text>
</comment>
<proteinExistence type="inferred from homology"/>
<sequence>MQNKFLICDDCQAVNCKSLERKLKKLDPEAEIEIGCQSYCGPGRRKTFAFVNNRPLAALTEDELMEKVEKQLQKPRDPEEEERLRKRNEERKRRKEEQDRKLKEKLAKRKQTKA</sequence>
<feature type="chain" id="PRO_1000188712" description="UPF0741 protein Sca_0247">
    <location>
        <begin position="1"/>
        <end position="114"/>
    </location>
</feature>
<feature type="region of interest" description="Disordered" evidence="2">
    <location>
        <begin position="67"/>
        <end position="114"/>
    </location>
</feature>
<feature type="coiled-coil region" evidence="1">
    <location>
        <begin position="78"/>
        <end position="114"/>
    </location>
</feature>
<feature type="compositionally biased region" description="Basic and acidic residues" evidence="2">
    <location>
        <begin position="67"/>
        <end position="105"/>
    </location>
</feature>
<organism>
    <name type="scientific">Staphylococcus carnosus (strain TM300)</name>
    <dbReference type="NCBI Taxonomy" id="396513"/>
    <lineage>
        <taxon>Bacteria</taxon>
        <taxon>Bacillati</taxon>
        <taxon>Bacillota</taxon>
        <taxon>Bacilli</taxon>
        <taxon>Bacillales</taxon>
        <taxon>Staphylococcaceae</taxon>
        <taxon>Staphylococcus</taxon>
    </lineage>
</organism>
<reference key="1">
    <citation type="journal article" date="2009" name="Appl. Environ. Microbiol.">
        <title>Genome analysis of the meat starter culture bacterium Staphylococcus carnosus TM300.</title>
        <authorList>
            <person name="Rosenstein R."/>
            <person name="Nerz C."/>
            <person name="Biswas L."/>
            <person name="Resch A."/>
            <person name="Raddatz G."/>
            <person name="Schuster S.C."/>
            <person name="Goetz F."/>
        </authorList>
    </citation>
    <scope>NUCLEOTIDE SEQUENCE [LARGE SCALE GENOMIC DNA]</scope>
    <source>
        <strain>TM300</strain>
    </source>
</reference>
<keyword id="KW-0175">Coiled coil</keyword>
<keyword id="KW-1185">Reference proteome</keyword>
<protein>
    <recommendedName>
        <fullName evidence="1">UPF0741 protein Sca_0247</fullName>
    </recommendedName>
</protein>
<evidence type="ECO:0000255" key="1">
    <source>
        <dbReference type="HAMAP-Rule" id="MF_01863"/>
    </source>
</evidence>
<evidence type="ECO:0000256" key="2">
    <source>
        <dbReference type="SAM" id="MobiDB-lite"/>
    </source>
</evidence>
<gene>
    <name type="ordered locus">Sca_0247</name>
</gene>